<evidence type="ECO:0000255" key="1">
    <source>
        <dbReference type="HAMAP-Rule" id="MF_00033"/>
    </source>
</evidence>
<gene>
    <name evidence="1" type="primary">murG</name>
    <name type="ordered locus">SaurJH1_1507</name>
</gene>
<accession>A6U1N8</accession>
<name>MURG_STAA2</name>
<sequence>MTKIAFTGGGTVGHVSVNLSLIPTALSQGYEALYIGSKNGIEREMIESQLPEIKYYPISSGKLRRYISLENAKDVFKVLKGILDARKVLKKEKPDLLFSKGGFVSVPVVIAAKSLNIPTIIHESDLTPGLANKIALKFAKKIYTTFEETLNYLPKEKADFIGATIREDLKNGNAHNGYQLTGFNENKKVLLVMGGSLGSKKLNSIIRENLDALLQQYQVIHLTGKGLKDAQVKKSGYIQYEFVKEDLTDLLAITDTVISRAGSNAIYEFLTLRIPMLLVPLGLDQSRGDQIDNANHFADKGYAKTIDEEQLTAQILLQELNEMEQERTRIINNMKSYEQSYTKEALFDKMIKDALN</sequence>
<protein>
    <recommendedName>
        <fullName evidence="1">UDP-N-acetylglucosamine--N-acetylmuramyl-(pentapeptide) pyrophosphoryl-undecaprenol N-acetylglucosamine transferase</fullName>
        <ecNumber evidence="1">2.4.1.227</ecNumber>
    </recommendedName>
    <alternativeName>
        <fullName evidence="1">Undecaprenyl-PP-MurNAc-pentapeptide-UDPGlcNAc GlcNAc transferase</fullName>
    </alternativeName>
</protein>
<reference key="1">
    <citation type="submission" date="2007-06" db="EMBL/GenBank/DDBJ databases">
        <title>Complete sequence of chromosome of Staphylococcus aureus subsp. aureus JH1.</title>
        <authorList>
            <consortium name="US DOE Joint Genome Institute"/>
            <person name="Copeland A."/>
            <person name="Lucas S."/>
            <person name="Lapidus A."/>
            <person name="Barry K."/>
            <person name="Detter J.C."/>
            <person name="Glavina del Rio T."/>
            <person name="Hammon N."/>
            <person name="Israni S."/>
            <person name="Dalin E."/>
            <person name="Tice H."/>
            <person name="Pitluck S."/>
            <person name="Chain P."/>
            <person name="Malfatti S."/>
            <person name="Shin M."/>
            <person name="Vergez L."/>
            <person name="Schmutz J."/>
            <person name="Larimer F."/>
            <person name="Land M."/>
            <person name="Hauser L."/>
            <person name="Kyrpides N."/>
            <person name="Ivanova N."/>
            <person name="Tomasz A."/>
            <person name="Richardson P."/>
        </authorList>
    </citation>
    <scope>NUCLEOTIDE SEQUENCE [LARGE SCALE GENOMIC DNA]</scope>
    <source>
        <strain>JH1</strain>
    </source>
</reference>
<proteinExistence type="inferred from homology"/>
<dbReference type="EC" id="2.4.1.227" evidence="1"/>
<dbReference type="EMBL" id="CP000736">
    <property type="protein sequence ID" value="ABR52356.1"/>
    <property type="molecule type" value="Genomic_DNA"/>
</dbReference>
<dbReference type="SMR" id="A6U1N8"/>
<dbReference type="CAZy" id="GT28">
    <property type="family name" value="Glycosyltransferase Family 28"/>
</dbReference>
<dbReference type="KEGG" id="sah:SaurJH1_1507"/>
<dbReference type="HOGENOM" id="CLU_037404_0_0_9"/>
<dbReference type="UniPathway" id="UPA00219"/>
<dbReference type="GO" id="GO:0005886">
    <property type="term" value="C:plasma membrane"/>
    <property type="evidence" value="ECO:0007669"/>
    <property type="project" value="UniProtKB-SubCell"/>
</dbReference>
<dbReference type="GO" id="GO:0050511">
    <property type="term" value="F:undecaprenyldiphospho-muramoylpentapeptide beta-N-acetylglucosaminyltransferase activity"/>
    <property type="evidence" value="ECO:0007669"/>
    <property type="project" value="UniProtKB-UniRule"/>
</dbReference>
<dbReference type="GO" id="GO:0005975">
    <property type="term" value="P:carbohydrate metabolic process"/>
    <property type="evidence" value="ECO:0007669"/>
    <property type="project" value="InterPro"/>
</dbReference>
<dbReference type="GO" id="GO:0051301">
    <property type="term" value="P:cell division"/>
    <property type="evidence" value="ECO:0007669"/>
    <property type="project" value="UniProtKB-KW"/>
</dbReference>
<dbReference type="GO" id="GO:0071555">
    <property type="term" value="P:cell wall organization"/>
    <property type="evidence" value="ECO:0007669"/>
    <property type="project" value="UniProtKB-KW"/>
</dbReference>
<dbReference type="GO" id="GO:0030259">
    <property type="term" value="P:lipid glycosylation"/>
    <property type="evidence" value="ECO:0007669"/>
    <property type="project" value="UniProtKB-UniRule"/>
</dbReference>
<dbReference type="GO" id="GO:0009252">
    <property type="term" value="P:peptidoglycan biosynthetic process"/>
    <property type="evidence" value="ECO:0007669"/>
    <property type="project" value="UniProtKB-UniRule"/>
</dbReference>
<dbReference type="GO" id="GO:0008360">
    <property type="term" value="P:regulation of cell shape"/>
    <property type="evidence" value="ECO:0007669"/>
    <property type="project" value="UniProtKB-KW"/>
</dbReference>
<dbReference type="CDD" id="cd03785">
    <property type="entry name" value="GT28_MurG"/>
    <property type="match status" value="1"/>
</dbReference>
<dbReference type="Gene3D" id="3.40.50.2000">
    <property type="entry name" value="Glycogen Phosphorylase B"/>
    <property type="match status" value="2"/>
</dbReference>
<dbReference type="HAMAP" id="MF_00033">
    <property type="entry name" value="MurG"/>
    <property type="match status" value="1"/>
</dbReference>
<dbReference type="InterPro" id="IPR006009">
    <property type="entry name" value="GlcNAc_MurG"/>
</dbReference>
<dbReference type="InterPro" id="IPR007235">
    <property type="entry name" value="Glyco_trans_28_C"/>
</dbReference>
<dbReference type="InterPro" id="IPR004276">
    <property type="entry name" value="GlycoTrans_28_N"/>
</dbReference>
<dbReference type="NCBIfam" id="NF009102">
    <property type="entry name" value="PRK12446.1"/>
    <property type="match status" value="1"/>
</dbReference>
<dbReference type="PANTHER" id="PTHR21015:SF27">
    <property type="entry name" value="UDP-N-ACETYLGLUCOSAMINE--N-ACETYLMURAMYL-(PENTAPEPTIDE) PYROPHOSPHORYL-UNDECAPRENOL N-ACETYLGLUCOSAMINE TRANSFERASE"/>
    <property type="match status" value="1"/>
</dbReference>
<dbReference type="PANTHER" id="PTHR21015">
    <property type="entry name" value="UDP-N-ACETYLGLUCOSAMINE--N-ACETYLMURAMYL-(PENTAPEPTIDE) PYROPHOSPHORYL-UNDECAPRENOL N-ACETYLGLUCOSAMINE TRANSFERASE 1"/>
    <property type="match status" value="1"/>
</dbReference>
<dbReference type="Pfam" id="PF04101">
    <property type="entry name" value="Glyco_tran_28_C"/>
    <property type="match status" value="1"/>
</dbReference>
<dbReference type="Pfam" id="PF03033">
    <property type="entry name" value="Glyco_transf_28"/>
    <property type="match status" value="1"/>
</dbReference>
<dbReference type="SUPFAM" id="SSF53756">
    <property type="entry name" value="UDP-Glycosyltransferase/glycogen phosphorylase"/>
    <property type="match status" value="1"/>
</dbReference>
<comment type="function">
    <text evidence="1">Cell wall formation. Catalyzes the transfer of a GlcNAc subunit on undecaprenyl-pyrophosphoryl-MurNAc-pentapeptide (lipid intermediate I) to form undecaprenyl-pyrophosphoryl-MurNAc-(pentapeptide)GlcNAc (lipid intermediate II).</text>
</comment>
<comment type="catalytic activity">
    <reaction evidence="1">
        <text>Mur2Ac(oyl-L-Ala-gamma-D-Glu-L-Lys-D-Ala-D-Ala)-di-trans,octa-cis-undecaprenyl diphosphate + UDP-N-acetyl-alpha-D-glucosamine = beta-D-GlcNAc-(1-&gt;4)-Mur2Ac(oyl-L-Ala-gamma-D-Glu-L-Lys-D-Ala-D-Ala)-di-trans,octa-cis-undecaprenyl diphosphate + UDP + H(+)</text>
        <dbReference type="Rhea" id="RHEA:23192"/>
        <dbReference type="ChEBI" id="CHEBI:15378"/>
        <dbReference type="ChEBI" id="CHEBI:57705"/>
        <dbReference type="ChEBI" id="CHEBI:58223"/>
        <dbReference type="ChEBI" id="CHEBI:60032"/>
        <dbReference type="ChEBI" id="CHEBI:60033"/>
        <dbReference type="EC" id="2.4.1.227"/>
    </reaction>
</comment>
<comment type="pathway">
    <text evidence="1">Cell wall biogenesis; peptidoglycan biosynthesis.</text>
</comment>
<comment type="subcellular location">
    <subcellularLocation>
        <location evidence="1">Cell membrane</location>
        <topology evidence="1">Peripheral membrane protein</topology>
        <orientation evidence="1">Cytoplasmic side</orientation>
    </subcellularLocation>
</comment>
<comment type="similarity">
    <text evidence="1">Belongs to the glycosyltransferase 28 family. MurG subfamily.</text>
</comment>
<organism>
    <name type="scientific">Staphylococcus aureus (strain JH1)</name>
    <dbReference type="NCBI Taxonomy" id="359787"/>
    <lineage>
        <taxon>Bacteria</taxon>
        <taxon>Bacillati</taxon>
        <taxon>Bacillota</taxon>
        <taxon>Bacilli</taxon>
        <taxon>Bacillales</taxon>
        <taxon>Staphylococcaceae</taxon>
        <taxon>Staphylococcus</taxon>
    </lineage>
</organism>
<keyword id="KW-0131">Cell cycle</keyword>
<keyword id="KW-0132">Cell division</keyword>
<keyword id="KW-1003">Cell membrane</keyword>
<keyword id="KW-0133">Cell shape</keyword>
<keyword id="KW-0961">Cell wall biogenesis/degradation</keyword>
<keyword id="KW-0328">Glycosyltransferase</keyword>
<keyword id="KW-0472">Membrane</keyword>
<keyword id="KW-0573">Peptidoglycan synthesis</keyword>
<keyword id="KW-0808">Transferase</keyword>
<feature type="chain" id="PRO_1000074473" description="UDP-N-acetylglucosamine--N-acetylmuramyl-(pentapeptide) pyrophosphoryl-undecaprenol N-acetylglucosamine transferase">
    <location>
        <begin position="1"/>
        <end position="356"/>
    </location>
</feature>
<feature type="binding site" evidence="1">
    <location>
        <position position="166"/>
    </location>
    <ligand>
        <name>UDP-N-acetyl-alpha-D-glucosamine</name>
        <dbReference type="ChEBI" id="CHEBI:57705"/>
    </ligand>
</feature>
<feature type="binding site" evidence="1">
    <location>
        <position position="196"/>
    </location>
    <ligand>
        <name>UDP-N-acetyl-alpha-D-glucosamine</name>
        <dbReference type="ChEBI" id="CHEBI:57705"/>
    </ligand>
</feature>
<feature type="binding site" evidence="1">
    <location>
        <position position="290"/>
    </location>
    <ligand>
        <name>UDP-N-acetyl-alpha-D-glucosamine</name>
        <dbReference type="ChEBI" id="CHEBI:57705"/>
    </ligand>
</feature>